<sequence>MKPDAHLVKQFLLNLQDTICQQLTAVDGAEFVEDSWQREAGGGGRSRVLRNGGVFEQAGVNFSHVHGDAMPASATAHRPELAGRSFEAMGVSLVVHPHNPYVPTSHANVRFFIAEKPGAEPVWWFGGGFDLTPFYGFEEDAIHWHRTARDLCLPFGEDVYPRYKKWCDEYFYLKHRNEQRGIGGLFFDDLNTPDFDHCFAFMQAVGKGYTNAYLPIVERRKTMAYGERERNFQLYRRGRYVEFNLVWDRGTLFGLQTGGRTESILMSMPPLVRWEYDYQPKDGSPEAALNEFIKVRDWV</sequence>
<gene>
    <name evidence="1" type="primary">hemF</name>
    <name type="ordered locus">ECIAI39_2581</name>
</gene>
<reference key="1">
    <citation type="journal article" date="2009" name="PLoS Genet.">
        <title>Organised genome dynamics in the Escherichia coli species results in highly diverse adaptive paths.</title>
        <authorList>
            <person name="Touchon M."/>
            <person name="Hoede C."/>
            <person name="Tenaillon O."/>
            <person name="Barbe V."/>
            <person name="Baeriswyl S."/>
            <person name="Bidet P."/>
            <person name="Bingen E."/>
            <person name="Bonacorsi S."/>
            <person name="Bouchier C."/>
            <person name="Bouvet O."/>
            <person name="Calteau A."/>
            <person name="Chiapello H."/>
            <person name="Clermont O."/>
            <person name="Cruveiller S."/>
            <person name="Danchin A."/>
            <person name="Diard M."/>
            <person name="Dossat C."/>
            <person name="Karoui M.E."/>
            <person name="Frapy E."/>
            <person name="Garry L."/>
            <person name="Ghigo J.M."/>
            <person name="Gilles A.M."/>
            <person name="Johnson J."/>
            <person name="Le Bouguenec C."/>
            <person name="Lescat M."/>
            <person name="Mangenot S."/>
            <person name="Martinez-Jehanne V."/>
            <person name="Matic I."/>
            <person name="Nassif X."/>
            <person name="Oztas S."/>
            <person name="Petit M.A."/>
            <person name="Pichon C."/>
            <person name="Rouy Z."/>
            <person name="Ruf C.S."/>
            <person name="Schneider D."/>
            <person name="Tourret J."/>
            <person name="Vacherie B."/>
            <person name="Vallenet D."/>
            <person name="Medigue C."/>
            <person name="Rocha E.P.C."/>
            <person name="Denamur E."/>
        </authorList>
    </citation>
    <scope>NUCLEOTIDE SEQUENCE [LARGE SCALE GENOMIC DNA]</scope>
    <source>
        <strain>IAI39 / ExPEC</strain>
    </source>
</reference>
<dbReference type="EC" id="1.3.3.3" evidence="1"/>
<dbReference type="EMBL" id="CU928164">
    <property type="protein sequence ID" value="CAR18705.1"/>
    <property type="molecule type" value="Genomic_DNA"/>
</dbReference>
<dbReference type="RefSeq" id="WP_012602430.1">
    <property type="nucleotide sequence ID" value="NC_011750.1"/>
</dbReference>
<dbReference type="RefSeq" id="YP_002408531.1">
    <property type="nucleotide sequence ID" value="NC_011750.1"/>
</dbReference>
<dbReference type="SMR" id="B7NPX2"/>
<dbReference type="STRING" id="585057.ECIAI39_2581"/>
<dbReference type="KEGG" id="ect:ECIAI39_2581"/>
<dbReference type="PATRIC" id="fig|585057.6.peg.2687"/>
<dbReference type="HOGENOM" id="CLU_026169_0_1_6"/>
<dbReference type="UniPathway" id="UPA00251">
    <property type="reaction ID" value="UER00322"/>
</dbReference>
<dbReference type="Proteomes" id="UP000000749">
    <property type="component" value="Chromosome"/>
</dbReference>
<dbReference type="GO" id="GO:0005737">
    <property type="term" value="C:cytoplasm"/>
    <property type="evidence" value="ECO:0007669"/>
    <property type="project" value="UniProtKB-SubCell"/>
</dbReference>
<dbReference type="GO" id="GO:0004109">
    <property type="term" value="F:coproporphyrinogen oxidase activity"/>
    <property type="evidence" value="ECO:0007669"/>
    <property type="project" value="UniProtKB-UniRule"/>
</dbReference>
<dbReference type="GO" id="GO:0030145">
    <property type="term" value="F:manganese ion binding"/>
    <property type="evidence" value="ECO:0007669"/>
    <property type="project" value="UniProtKB-UniRule"/>
</dbReference>
<dbReference type="GO" id="GO:0042803">
    <property type="term" value="F:protein homodimerization activity"/>
    <property type="evidence" value="ECO:0000250"/>
    <property type="project" value="UniProtKB"/>
</dbReference>
<dbReference type="GO" id="GO:0006782">
    <property type="term" value="P:protoporphyrinogen IX biosynthetic process"/>
    <property type="evidence" value="ECO:0007669"/>
    <property type="project" value="UniProtKB-UniRule"/>
</dbReference>
<dbReference type="FunFam" id="3.40.1500.10:FF:000001">
    <property type="entry name" value="Oxygen-dependent coproporphyrinogen-III oxidase"/>
    <property type="match status" value="1"/>
</dbReference>
<dbReference type="Gene3D" id="3.40.1500.10">
    <property type="entry name" value="Coproporphyrinogen III oxidase, aerobic"/>
    <property type="match status" value="1"/>
</dbReference>
<dbReference type="HAMAP" id="MF_00333">
    <property type="entry name" value="Coprogen_oxidas"/>
    <property type="match status" value="1"/>
</dbReference>
<dbReference type="InterPro" id="IPR001260">
    <property type="entry name" value="Coprogen_oxidase_aer"/>
</dbReference>
<dbReference type="InterPro" id="IPR036406">
    <property type="entry name" value="Coprogen_oxidase_aer_sf"/>
</dbReference>
<dbReference type="InterPro" id="IPR018375">
    <property type="entry name" value="Coprogen_oxidase_CS"/>
</dbReference>
<dbReference type="NCBIfam" id="NF003727">
    <property type="entry name" value="PRK05330.1"/>
    <property type="match status" value="1"/>
</dbReference>
<dbReference type="PANTHER" id="PTHR10755">
    <property type="entry name" value="COPROPORPHYRINOGEN III OXIDASE, MITOCHONDRIAL"/>
    <property type="match status" value="1"/>
</dbReference>
<dbReference type="PANTHER" id="PTHR10755:SF0">
    <property type="entry name" value="OXYGEN-DEPENDENT COPROPORPHYRINOGEN-III OXIDASE, MITOCHONDRIAL"/>
    <property type="match status" value="1"/>
</dbReference>
<dbReference type="Pfam" id="PF01218">
    <property type="entry name" value="Coprogen_oxidas"/>
    <property type="match status" value="1"/>
</dbReference>
<dbReference type="PIRSF" id="PIRSF000166">
    <property type="entry name" value="Coproporphyri_ox"/>
    <property type="match status" value="1"/>
</dbReference>
<dbReference type="PRINTS" id="PR00073">
    <property type="entry name" value="COPRGNOXDASE"/>
</dbReference>
<dbReference type="SUPFAM" id="SSF102886">
    <property type="entry name" value="Coproporphyrinogen III oxidase"/>
    <property type="match status" value="1"/>
</dbReference>
<dbReference type="PROSITE" id="PS01021">
    <property type="entry name" value="COPROGEN_OXIDASE"/>
    <property type="match status" value="1"/>
</dbReference>
<protein>
    <recommendedName>
        <fullName evidence="1">Oxygen-dependent coproporphyrinogen-III oxidase</fullName>
        <shortName evidence="1">CPO</shortName>
        <shortName evidence="1">Coprogen oxidase</shortName>
        <shortName evidence="1">Coproporphyrinogenase</shortName>
        <ecNumber evidence="1">1.3.3.3</ecNumber>
    </recommendedName>
</protein>
<name>HEM6_ECO7I</name>
<accession>B7NPX2</accession>
<proteinExistence type="inferred from homology"/>
<evidence type="ECO:0000255" key="1">
    <source>
        <dbReference type="HAMAP-Rule" id="MF_00333"/>
    </source>
</evidence>
<organism>
    <name type="scientific">Escherichia coli O7:K1 (strain IAI39 / ExPEC)</name>
    <dbReference type="NCBI Taxonomy" id="585057"/>
    <lineage>
        <taxon>Bacteria</taxon>
        <taxon>Pseudomonadati</taxon>
        <taxon>Pseudomonadota</taxon>
        <taxon>Gammaproteobacteria</taxon>
        <taxon>Enterobacterales</taxon>
        <taxon>Enterobacteriaceae</taxon>
        <taxon>Escherichia</taxon>
    </lineage>
</organism>
<comment type="function">
    <text evidence="1">Involved in the heme biosynthesis. Catalyzes the aerobic oxidative decarboxylation of propionate groups of rings A and B of coproporphyrinogen-III to yield the vinyl groups in protoporphyrinogen-IX.</text>
</comment>
<comment type="catalytic activity">
    <reaction evidence="1">
        <text>coproporphyrinogen III + O2 + 2 H(+) = protoporphyrinogen IX + 2 CO2 + 2 H2O</text>
        <dbReference type="Rhea" id="RHEA:18257"/>
        <dbReference type="ChEBI" id="CHEBI:15377"/>
        <dbReference type="ChEBI" id="CHEBI:15378"/>
        <dbReference type="ChEBI" id="CHEBI:15379"/>
        <dbReference type="ChEBI" id="CHEBI:16526"/>
        <dbReference type="ChEBI" id="CHEBI:57307"/>
        <dbReference type="ChEBI" id="CHEBI:57309"/>
        <dbReference type="EC" id="1.3.3.3"/>
    </reaction>
</comment>
<comment type="cofactor">
    <cofactor evidence="1">
        <name>Mn(2+)</name>
        <dbReference type="ChEBI" id="CHEBI:29035"/>
    </cofactor>
</comment>
<comment type="pathway">
    <text evidence="1">Porphyrin-containing compound metabolism; protoporphyrin-IX biosynthesis; protoporphyrinogen-IX from coproporphyrinogen-III (O2 route): step 1/1.</text>
</comment>
<comment type="subunit">
    <text evidence="1">Homodimer.</text>
</comment>
<comment type="subcellular location">
    <subcellularLocation>
        <location evidence="1">Cytoplasm</location>
    </subcellularLocation>
</comment>
<comment type="similarity">
    <text evidence="1">Belongs to the aerobic coproporphyrinogen-III oxidase family.</text>
</comment>
<feature type="chain" id="PRO_1000119797" description="Oxygen-dependent coproporphyrinogen-III oxidase">
    <location>
        <begin position="1"/>
        <end position="299"/>
    </location>
</feature>
<feature type="region of interest" description="Important for dimerization" evidence="1">
    <location>
        <begin position="240"/>
        <end position="275"/>
    </location>
</feature>
<feature type="active site" description="Proton donor" evidence="1">
    <location>
        <position position="106"/>
    </location>
</feature>
<feature type="binding site" evidence="1">
    <location>
        <position position="92"/>
    </location>
    <ligand>
        <name>substrate</name>
    </ligand>
</feature>
<feature type="binding site" evidence="1">
    <location>
        <position position="96"/>
    </location>
    <ligand>
        <name>Mn(2+)</name>
        <dbReference type="ChEBI" id="CHEBI:29035"/>
    </ligand>
</feature>
<feature type="binding site" evidence="1">
    <location>
        <position position="106"/>
    </location>
    <ligand>
        <name>Mn(2+)</name>
        <dbReference type="ChEBI" id="CHEBI:29035"/>
    </ligand>
</feature>
<feature type="binding site" evidence="1">
    <location>
        <begin position="108"/>
        <end position="110"/>
    </location>
    <ligand>
        <name>substrate</name>
    </ligand>
</feature>
<feature type="binding site" evidence="1">
    <location>
        <position position="145"/>
    </location>
    <ligand>
        <name>Mn(2+)</name>
        <dbReference type="ChEBI" id="CHEBI:29035"/>
    </ligand>
</feature>
<feature type="binding site" evidence="1">
    <location>
        <position position="175"/>
    </location>
    <ligand>
        <name>Mn(2+)</name>
        <dbReference type="ChEBI" id="CHEBI:29035"/>
    </ligand>
</feature>
<feature type="binding site" evidence="1">
    <location>
        <begin position="258"/>
        <end position="260"/>
    </location>
    <ligand>
        <name>substrate</name>
    </ligand>
</feature>
<feature type="site" description="Important for dimerization" evidence="1">
    <location>
        <position position="175"/>
    </location>
</feature>
<keyword id="KW-0963">Cytoplasm</keyword>
<keyword id="KW-0350">Heme biosynthesis</keyword>
<keyword id="KW-0464">Manganese</keyword>
<keyword id="KW-0479">Metal-binding</keyword>
<keyword id="KW-0560">Oxidoreductase</keyword>
<keyword id="KW-0627">Porphyrin biosynthesis</keyword>